<proteinExistence type="inferred from homology"/>
<keyword id="KW-0131">Cell cycle</keyword>
<keyword id="KW-0132">Cell division</keyword>
<keyword id="KW-0997">Cell inner membrane</keyword>
<keyword id="KW-1003">Cell membrane</keyword>
<keyword id="KW-0133">Cell shape</keyword>
<keyword id="KW-0961">Cell wall biogenesis/degradation</keyword>
<keyword id="KW-0328">Glycosyltransferase</keyword>
<keyword id="KW-0472">Membrane</keyword>
<keyword id="KW-0573">Peptidoglycan synthesis</keyword>
<keyword id="KW-1185">Reference proteome</keyword>
<keyword id="KW-0808">Transferase</keyword>
<feature type="chain" id="PRO_0000225033" description="UDP-N-acetylglucosamine--N-acetylmuramyl-(pentapeptide) pyrophosphoryl-undecaprenol N-acetylglucosamine transferase">
    <location>
        <begin position="1"/>
        <end position="355"/>
    </location>
</feature>
<feature type="binding site" evidence="1">
    <location>
        <begin position="14"/>
        <end position="16"/>
    </location>
    <ligand>
        <name>UDP-N-acetyl-alpha-D-glucosamine</name>
        <dbReference type="ChEBI" id="CHEBI:57705"/>
    </ligand>
</feature>
<feature type="binding site" evidence="1">
    <location>
        <position position="126"/>
    </location>
    <ligand>
        <name>UDP-N-acetyl-alpha-D-glucosamine</name>
        <dbReference type="ChEBI" id="CHEBI:57705"/>
    </ligand>
</feature>
<feature type="binding site" evidence="1">
    <location>
        <position position="162"/>
    </location>
    <ligand>
        <name>UDP-N-acetyl-alpha-D-glucosamine</name>
        <dbReference type="ChEBI" id="CHEBI:57705"/>
    </ligand>
</feature>
<feature type="binding site" evidence="1">
    <location>
        <position position="190"/>
    </location>
    <ligand>
        <name>UDP-N-acetyl-alpha-D-glucosamine</name>
        <dbReference type="ChEBI" id="CHEBI:57705"/>
    </ligand>
</feature>
<feature type="binding site" evidence="1">
    <location>
        <position position="243"/>
    </location>
    <ligand>
        <name>UDP-N-acetyl-alpha-D-glucosamine</name>
        <dbReference type="ChEBI" id="CHEBI:57705"/>
    </ligand>
</feature>
<feature type="binding site" evidence="1">
    <location>
        <begin position="262"/>
        <end position="267"/>
    </location>
    <ligand>
        <name>UDP-N-acetyl-alpha-D-glucosamine</name>
        <dbReference type="ChEBI" id="CHEBI:57705"/>
    </ligand>
</feature>
<feature type="binding site" evidence="1">
    <location>
        <position position="288"/>
    </location>
    <ligand>
        <name>UDP-N-acetyl-alpha-D-glucosamine</name>
        <dbReference type="ChEBI" id="CHEBI:57705"/>
    </ligand>
</feature>
<dbReference type="EC" id="2.4.1.227" evidence="1"/>
<dbReference type="EMBL" id="CP000016">
    <property type="protein sequence ID" value="AAZ40786.1"/>
    <property type="molecule type" value="Genomic_DNA"/>
</dbReference>
<dbReference type="RefSeq" id="WP_011282693.1">
    <property type="nucleotide sequence ID" value="NC_007292.1"/>
</dbReference>
<dbReference type="SMR" id="Q493Q1"/>
<dbReference type="STRING" id="291272.BPEN_146"/>
<dbReference type="CAZy" id="GT28">
    <property type="family name" value="Glycosyltransferase Family 28"/>
</dbReference>
<dbReference type="KEGG" id="bpn:BPEN_146"/>
<dbReference type="eggNOG" id="COG0707">
    <property type="taxonomic scope" value="Bacteria"/>
</dbReference>
<dbReference type="HOGENOM" id="CLU_037404_2_0_6"/>
<dbReference type="OrthoDB" id="9808936at2"/>
<dbReference type="UniPathway" id="UPA00219"/>
<dbReference type="Proteomes" id="UP000007794">
    <property type="component" value="Chromosome"/>
</dbReference>
<dbReference type="GO" id="GO:0005886">
    <property type="term" value="C:plasma membrane"/>
    <property type="evidence" value="ECO:0007669"/>
    <property type="project" value="UniProtKB-SubCell"/>
</dbReference>
<dbReference type="GO" id="GO:0051991">
    <property type="term" value="F:UDP-N-acetyl-D-glucosamine:N-acetylmuramoyl-L-alanyl-D-glutamyl-meso-2,6-diaminopimelyl-D-alanyl-D-alanine-diphosphoundecaprenol 4-beta-N-acetylglucosaminlytransferase activity"/>
    <property type="evidence" value="ECO:0007669"/>
    <property type="project" value="RHEA"/>
</dbReference>
<dbReference type="GO" id="GO:0050511">
    <property type="term" value="F:undecaprenyldiphospho-muramoylpentapeptide beta-N-acetylglucosaminyltransferase activity"/>
    <property type="evidence" value="ECO:0007669"/>
    <property type="project" value="UniProtKB-UniRule"/>
</dbReference>
<dbReference type="GO" id="GO:0005975">
    <property type="term" value="P:carbohydrate metabolic process"/>
    <property type="evidence" value="ECO:0007669"/>
    <property type="project" value="InterPro"/>
</dbReference>
<dbReference type="GO" id="GO:0051301">
    <property type="term" value="P:cell division"/>
    <property type="evidence" value="ECO:0007669"/>
    <property type="project" value="UniProtKB-KW"/>
</dbReference>
<dbReference type="GO" id="GO:0071555">
    <property type="term" value="P:cell wall organization"/>
    <property type="evidence" value="ECO:0007669"/>
    <property type="project" value="UniProtKB-KW"/>
</dbReference>
<dbReference type="GO" id="GO:0030259">
    <property type="term" value="P:lipid glycosylation"/>
    <property type="evidence" value="ECO:0007669"/>
    <property type="project" value="UniProtKB-UniRule"/>
</dbReference>
<dbReference type="GO" id="GO:0009252">
    <property type="term" value="P:peptidoglycan biosynthetic process"/>
    <property type="evidence" value="ECO:0007669"/>
    <property type="project" value="UniProtKB-UniRule"/>
</dbReference>
<dbReference type="GO" id="GO:0008360">
    <property type="term" value="P:regulation of cell shape"/>
    <property type="evidence" value="ECO:0007669"/>
    <property type="project" value="UniProtKB-KW"/>
</dbReference>
<dbReference type="CDD" id="cd03785">
    <property type="entry name" value="GT28_MurG"/>
    <property type="match status" value="1"/>
</dbReference>
<dbReference type="Gene3D" id="3.40.50.2000">
    <property type="entry name" value="Glycogen Phosphorylase B"/>
    <property type="match status" value="2"/>
</dbReference>
<dbReference type="HAMAP" id="MF_00033">
    <property type="entry name" value="MurG"/>
    <property type="match status" value="1"/>
</dbReference>
<dbReference type="InterPro" id="IPR006009">
    <property type="entry name" value="GlcNAc_MurG"/>
</dbReference>
<dbReference type="InterPro" id="IPR007235">
    <property type="entry name" value="Glyco_trans_28_C"/>
</dbReference>
<dbReference type="InterPro" id="IPR004276">
    <property type="entry name" value="GlycoTrans_28_N"/>
</dbReference>
<dbReference type="NCBIfam" id="TIGR01133">
    <property type="entry name" value="murG"/>
    <property type="match status" value="1"/>
</dbReference>
<dbReference type="PANTHER" id="PTHR21015:SF22">
    <property type="entry name" value="GLYCOSYLTRANSFERASE"/>
    <property type="match status" value="1"/>
</dbReference>
<dbReference type="PANTHER" id="PTHR21015">
    <property type="entry name" value="UDP-N-ACETYLGLUCOSAMINE--N-ACETYLMURAMYL-(PENTAPEPTIDE) PYROPHOSPHORYL-UNDECAPRENOL N-ACETYLGLUCOSAMINE TRANSFERASE 1"/>
    <property type="match status" value="1"/>
</dbReference>
<dbReference type="Pfam" id="PF04101">
    <property type="entry name" value="Glyco_tran_28_C"/>
    <property type="match status" value="1"/>
</dbReference>
<dbReference type="Pfam" id="PF03033">
    <property type="entry name" value="Glyco_transf_28"/>
    <property type="match status" value="1"/>
</dbReference>
<dbReference type="SUPFAM" id="SSF53756">
    <property type="entry name" value="UDP-Glycosyltransferase/glycogen phosphorylase"/>
    <property type="match status" value="1"/>
</dbReference>
<gene>
    <name evidence="1" type="primary">murG</name>
    <name type="ordered locus">BPEN_146</name>
</gene>
<accession>Q493Q1</accession>
<organism>
    <name type="scientific">Blochmanniella pennsylvanica (strain BPEN)</name>
    <dbReference type="NCBI Taxonomy" id="291272"/>
    <lineage>
        <taxon>Bacteria</taxon>
        <taxon>Pseudomonadati</taxon>
        <taxon>Pseudomonadota</taxon>
        <taxon>Gammaproteobacteria</taxon>
        <taxon>Enterobacterales</taxon>
        <taxon>Enterobacteriaceae</taxon>
        <taxon>ant endosymbionts</taxon>
        <taxon>Candidatus Blochmanniella</taxon>
    </lineage>
</organism>
<protein>
    <recommendedName>
        <fullName evidence="1">UDP-N-acetylglucosamine--N-acetylmuramyl-(pentapeptide) pyrophosphoryl-undecaprenol N-acetylglucosamine transferase</fullName>
        <ecNumber evidence="1">2.4.1.227</ecNumber>
    </recommendedName>
    <alternativeName>
        <fullName evidence="1">Undecaprenyl-PP-MurNAc-pentapeptide-UDPGlcNAc GlcNAc transferase</fullName>
    </alternativeName>
</protein>
<evidence type="ECO:0000255" key="1">
    <source>
        <dbReference type="HAMAP-Rule" id="MF_00033"/>
    </source>
</evidence>
<reference key="1">
    <citation type="journal article" date="2005" name="Genome Res.">
        <title>Genome sequence of Blochmannia pennsylvanicus indicates parallel evolutionary trends among bacterial mutualists of insects.</title>
        <authorList>
            <person name="Degnan P.H."/>
            <person name="Lazarus A.B."/>
            <person name="Wernegreen J.J."/>
        </authorList>
    </citation>
    <scope>NUCLEOTIDE SEQUENCE [LARGE SCALE GENOMIC DNA]</scope>
    <source>
        <strain>BPEN</strain>
    </source>
</reference>
<sequence>MNQKKKIMIVAGGSGGHVFPGLSVAHYLINHGYQVVWLGTADRIESKLVPQYGIDIKFIRINGWNGEKLHIKCIMPLFICLAIYQARKIIKYWKPDIVLGMGGYVSGPGGLAAWTCGVPLIIHEQNRIIGLTNRYLSIFSKKVLQGFPGTFPNAKMVGNPIRRAILAVPNPSRRWKGRVGPIRVLVIGGSQGAHILNKTIPNMAEKLSDKLIIWHQVGEQDFKKVIWAYQKIKQSYHRIVKFIDDIAQAYAWADILISRAGALTVSEVSIVGLPAIFVPFIHHKDRQQYWNAVPLVQAGAAKIIEQKNFTSDVVSAMLESWDRKTLCSMAQRARSIAAPNATQQVSQVIIEYLKK</sequence>
<comment type="function">
    <text evidence="1">Cell wall formation. Catalyzes the transfer of a GlcNAc subunit on undecaprenyl-pyrophosphoryl-MurNAc-pentapeptide (lipid intermediate I) to form undecaprenyl-pyrophosphoryl-MurNAc-(pentapeptide)GlcNAc (lipid intermediate II).</text>
</comment>
<comment type="catalytic activity">
    <reaction evidence="1">
        <text>di-trans,octa-cis-undecaprenyl diphospho-N-acetyl-alpha-D-muramoyl-L-alanyl-D-glutamyl-meso-2,6-diaminopimeloyl-D-alanyl-D-alanine + UDP-N-acetyl-alpha-D-glucosamine = di-trans,octa-cis-undecaprenyl diphospho-[N-acetyl-alpha-D-glucosaminyl-(1-&gt;4)]-N-acetyl-alpha-D-muramoyl-L-alanyl-D-glutamyl-meso-2,6-diaminopimeloyl-D-alanyl-D-alanine + UDP + H(+)</text>
        <dbReference type="Rhea" id="RHEA:31227"/>
        <dbReference type="ChEBI" id="CHEBI:15378"/>
        <dbReference type="ChEBI" id="CHEBI:57705"/>
        <dbReference type="ChEBI" id="CHEBI:58223"/>
        <dbReference type="ChEBI" id="CHEBI:61387"/>
        <dbReference type="ChEBI" id="CHEBI:61388"/>
        <dbReference type="EC" id="2.4.1.227"/>
    </reaction>
</comment>
<comment type="pathway">
    <text evidence="1">Cell wall biogenesis; peptidoglycan biosynthesis.</text>
</comment>
<comment type="subcellular location">
    <subcellularLocation>
        <location evidence="1">Cell inner membrane</location>
        <topology evidence="1">Peripheral membrane protein</topology>
        <orientation evidence="1">Cytoplasmic side</orientation>
    </subcellularLocation>
</comment>
<comment type="similarity">
    <text evidence="1">Belongs to the glycosyltransferase 28 family. MurG subfamily.</text>
</comment>
<name>MURG_BLOPB</name>